<gene>
    <name evidence="1" type="primary">rpo7</name>
    <name evidence="1" type="synonym">rpoE</name>
    <name type="ordered locus">SSO0415</name>
</gene>
<feature type="chain" id="PRO_0000453813" description="DNA-directed RNA polymerase subunit Rpo7">
    <location>
        <begin position="1"/>
        <end position="180"/>
    </location>
</feature>
<feature type="domain" description="S1 motif" evidence="1">
    <location>
        <begin position="82"/>
        <end position="165"/>
    </location>
</feature>
<feature type="strand" evidence="6">
    <location>
        <begin position="2"/>
        <end position="13"/>
    </location>
</feature>
<feature type="helix" evidence="6">
    <location>
        <begin position="15"/>
        <end position="17"/>
    </location>
</feature>
<feature type="strand" evidence="6">
    <location>
        <begin position="18"/>
        <end position="20"/>
    </location>
</feature>
<feature type="helix" evidence="6">
    <location>
        <begin position="22"/>
        <end position="31"/>
    </location>
</feature>
<feature type="strand" evidence="6">
    <location>
        <begin position="40"/>
        <end position="42"/>
    </location>
</feature>
<feature type="strand" evidence="6">
    <location>
        <begin position="44"/>
        <end position="48"/>
    </location>
</feature>
<feature type="strand" evidence="7">
    <location>
        <begin position="55"/>
        <end position="58"/>
    </location>
</feature>
<feature type="strand" evidence="6">
    <location>
        <begin position="65"/>
        <end position="77"/>
    </location>
</feature>
<feature type="strand" evidence="6">
    <location>
        <begin position="89"/>
        <end position="92"/>
    </location>
</feature>
<feature type="strand" evidence="6">
    <location>
        <begin position="94"/>
        <end position="100"/>
    </location>
</feature>
<feature type="strand" evidence="6">
    <location>
        <begin position="102"/>
        <end position="110"/>
    </location>
</feature>
<feature type="turn" evidence="6">
    <location>
        <begin position="111"/>
        <end position="113"/>
    </location>
</feature>
<feature type="turn" evidence="6">
    <location>
        <begin position="122"/>
        <end position="125"/>
    </location>
</feature>
<feature type="strand" evidence="6">
    <location>
        <begin position="130"/>
        <end position="132"/>
    </location>
</feature>
<feature type="strand" evidence="7">
    <location>
        <begin position="144"/>
        <end position="146"/>
    </location>
</feature>
<feature type="strand" evidence="7">
    <location>
        <begin position="160"/>
        <end position="163"/>
    </location>
</feature>
<feature type="strand" evidence="7">
    <location>
        <begin position="166"/>
        <end position="168"/>
    </location>
</feature>
<feature type="helix" evidence="6">
    <location>
        <begin position="172"/>
        <end position="175"/>
    </location>
</feature>
<feature type="turn" evidence="6">
    <location>
        <begin position="176"/>
        <end position="178"/>
    </location>
</feature>
<organism>
    <name type="scientific">Saccharolobus solfataricus (strain ATCC 35092 / DSM 1617 / JCM 11322 / P2)</name>
    <name type="common">Sulfolobus solfataricus</name>
    <dbReference type="NCBI Taxonomy" id="273057"/>
    <lineage>
        <taxon>Archaea</taxon>
        <taxon>Thermoproteota</taxon>
        <taxon>Thermoprotei</taxon>
        <taxon>Sulfolobales</taxon>
        <taxon>Sulfolobaceae</taxon>
        <taxon>Saccharolobus</taxon>
    </lineage>
</organism>
<comment type="function">
    <text evidence="1">DNA-dependent RNA polymerase (RNAP) catalyzes the transcription of DNA into RNA using the four ribonucleoside triphosphates as substrates.</text>
</comment>
<comment type="catalytic activity">
    <reaction evidence="1">
        <text>RNA(n) + a ribonucleoside 5'-triphosphate = RNA(n+1) + diphosphate</text>
        <dbReference type="Rhea" id="RHEA:21248"/>
        <dbReference type="Rhea" id="RHEA-COMP:14527"/>
        <dbReference type="Rhea" id="RHEA-COMP:17342"/>
        <dbReference type="ChEBI" id="CHEBI:33019"/>
        <dbReference type="ChEBI" id="CHEBI:61557"/>
        <dbReference type="ChEBI" id="CHEBI:140395"/>
        <dbReference type="EC" id="2.7.7.6"/>
    </reaction>
</comment>
<comment type="subunit">
    <text evidence="2">Part of the 13-subunit RNA polymerase complex. Forms a stalk with Rpo4 that extends from the main structure.</text>
</comment>
<comment type="subcellular location">
    <subcellularLocation>
        <location evidence="1">Cytoplasm</location>
    </subcellularLocation>
</comment>
<comment type="domain">
    <text evidence="1 2">Forms 2 domains with an elongated structure; Rpo4 packs into the hinge region between the 2 domains.</text>
</comment>
<comment type="similarity">
    <text evidence="1">Belongs to the eukaryotic RPB7/RPC8 RNA polymerase subunit family.</text>
</comment>
<sequence length="180" mass="20329">MYKLIKARSIVRIPPNEFGKPLNEIALNELRQQYQEKILKDLGLVLAILNVKTSEEGILVFGDGATYHEVEFDMITYVPVVQEVVEGEVLQVDNYGIFVNLGPMDGLVHISQITDDTLKYDNVRGIIFGEKSKKVIQKGDKVRARVISVASTVTGRLPRIALTMRQPYLGKLEWITQTKK</sequence>
<keyword id="KW-0002">3D-structure</keyword>
<keyword id="KW-0963">Cytoplasm</keyword>
<keyword id="KW-0240">DNA-directed RNA polymerase</keyword>
<keyword id="KW-0548">Nucleotidyltransferase</keyword>
<keyword id="KW-1185">Reference proteome</keyword>
<keyword id="KW-0804">Transcription</keyword>
<keyword id="KW-0808">Transferase</keyword>
<protein>
    <recommendedName>
        <fullName evidence="1">DNA-directed RNA polymerase subunit Rpo7</fullName>
        <ecNumber evidence="1">2.7.7.6</ecNumber>
    </recommendedName>
    <alternativeName>
        <fullName evidence="1">DNA-directed RNA polymerase subunit E</fullName>
    </alternativeName>
    <alternativeName>
        <fullName evidence="3">DNA-directed RNA polymerase, subunit E'</fullName>
    </alternativeName>
</protein>
<reference key="1">
    <citation type="journal article" date="2001" name="Proc. Natl. Acad. Sci. U.S.A.">
        <title>The complete genome of the crenarchaeon Sulfolobus solfataricus P2.</title>
        <authorList>
            <person name="She Q."/>
            <person name="Singh R.K."/>
            <person name="Confalonieri F."/>
            <person name="Zivanovic Y."/>
            <person name="Allard G."/>
            <person name="Awayez M.J."/>
            <person name="Chan-Weiher C.C.-Y."/>
            <person name="Clausen I.G."/>
            <person name="Curtis B.A."/>
            <person name="De Moors A."/>
            <person name="Erauso G."/>
            <person name="Fletcher C."/>
            <person name="Gordon P.M.K."/>
            <person name="Heikamp-de Jong I."/>
            <person name="Jeffries A.C."/>
            <person name="Kozera C.J."/>
            <person name="Medina N."/>
            <person name="Peng X."/>
            <person name="Thi-Ngoc H.P."/>
            <person name="Redder P."/>
            <person name="Schenk M.E."/>
            <person name="Theriault C."/>
            <person name="Tolstrup N."/>
            <person name="Charlebois R.L."/>
            <person name="Doolittle W.F."/>
            <person name="Duguet M."/>
            <person name="Gaasterland T."/>
            <person name="Garrett R.A."/>
            <person name="Ragan M.A."/>
            <person name="Sensen C.W."/>
            <person name="Van der Oost J."/>
        </authorList>
    </citation>
    <scope>NUCLEOTIDE SEQUENCE [LARGE SCALE GENOMIC DNA]</scope>
    <source>
        <strain>ATCC 35092 / DSM 1617 / JCM 11322 / P2</strain>
    </source>
</reference>
<reference evidence="4 5" key="2">
    <citation type="journal article" date="2008" name="Nature">
        <title>The X-ray crystal structure of RNA polymerase from Archaea.</title>
        <authorList>
            <person name="Hirata A."/>
            <person name="Klein B.J."/>
            <person name="Murakami K.S."/>
        </authorList>
    </citation>
    <scope>X-RAY CRYSTALLOGRAPHY (3.40 ANGSTROMS) OF THE RNA POLYMERASE COMPLEX</scope>
    <scope>SUBUNIT</scope>
    <source>
        <strain>ATCC 35092 / DSM 1617 / JCM 11322 / P2</strain>
    </source>
</reference>
<accession>Q980A3</accession>
<name>RPO7_SACS2</name>
<evidence type="ECO:0000255" key="1">
    <source>
        <dbReference type="HAMAP-Rule" id="MF_00865"/>
    </source>
</evidence>
<evidence type="ECO:0000269" key="2">
    <source>
    </source>
</evidence>
<evidence type="ECO:0000303" key="3">
    <source>
    </source>
</evidence>
<evidence type="ECO:0007744" key="4">
    <source>
        <dbReference type="PDB" id="2PMZ"/>
    </source>
</evidence>
<evidence type="ECO:0007744" key="5">
    <source>
        <dbReference type="PDB" id="3HKZ"/>
    </source>
</evidence>
<evidence type="ECO:0007829" key="6">
    <source>
        <dbReference type="PDB" id="2PMZ"/>
    </source>
</evidence>
<evidence type="ECO:0007829" key="7">
    <source>
        <dbReference type="PDB" id="3HKZ"/>
    </source>
</evidence>
<dbReference type="EC" id="2.7.7.6" evidence="1"/>
<dbReference type="EMBL" id="AE006641">
    <property type="protein sequence ID" value="AAK40742.1"/>
    <property type="molecule type" value="Genomic_DNA"/>
</dbReference>
<dbReference type="PIR" id="G90185">
    <property type="entry name" value="G90185"/>
</dbReference>
<dbReference type="RefSeq" id="WP_009988767.1">
    <property type="nucleotide sequence ID" value="NC_002754.1"/>
</dbReference>
<dbReference type="PDB" id="2PMZ">
    <property type="method" value="X-ray"/>
    <property type="resolution" value="3.40 A"/>
    <property type="chains" value="E/T=1-180"/>
</dbReference>
<dbReference type="PDB" id="3HKZ">
    <property type="method" value="X-ray"/>
    <property type="resolution" value="3.40 A"/>
    <property type="chains" value="E/Q=1-180"/>
</dbReference>
<dbReference type="PDBsum" id="2PMZ"/>
<dbReference type="PDBsum" id="3HKZ"/>
<dbReference type="SMR" id="Q980A3"/>
<dbReference type="DIP" id="DIP-60644N"/>
<dbReference type="FunCoup" id="Q980A3">
    <property type="interactions" value="260"/>
</dbReference>
<dbReference type="IntAct" id="Q980A3">
    <property type="interactions" value="1"/>
</dbReference>
<dbReference type="STRING" id="273057.SSO0415"/>
<dbReference type="PaxDb" id="273057-SSO0415"/>
<dbReference type="EnsemblBacteria" id="AAK40742">
    <property type="protein sequence ID" value="AAK40742"/>
    <property type="gene ID" value="SSO0415"/>
</dbReference>
<dbReference type="KEGG" id="sso:SSO0415"/>
<dbReference type="PATRIC" id="fig|273057.12.peg.409"/>
<dbReference type="eggNOG" id="arCOG00675">
    <property type="taxonomic scope" value="Archaea"/>
</dbReference>
<dbReference type="HOGENOM" id="CLU_117966_0_0_2"/>
<dbReference type="InParanoid" id="Q980A3"/>
<dbReference type="PhylomeDB" id="Q980A3"/>
<dbReference type="BRENDA" id="2.7.7.6">
    <property type="organism ID" value="6163"/>
</dbReference>
<dbReference type="EvolutionaryTrace" id="Q980A3"/>
<dbReference type="Proteomes" id="UP000001974">
    <property type="component" value="Chromosome"/>
</dbReference>
<dbReference type="GO" id="GO:0005737">
    <property type="term" value="C:cytoplasm"/>
    <property type="evidence" value="ECO:0007669"/>
    <property type="project" value="UniProtKB-SubCell"/>
</dbReference>
<dbReference type="GO" id="GO:0000428">
    <property type="term" value="C:DNA-directed RNA polymerase complex"/>
    <property type="evidence" value="ECO:0000314"/>
    <property type="project" value="UniProtKB"/>
</dbReference>
<dbReference type="GO" id="GO:0003677">
    <property type="term" value="F:DNA binding"/>
    <property type="evidence" value="ECO:0007669"/>
    <property type="project" value="InterPro"/>
</dbReference>
<dbReference type="GO" id="GO:0003899">
    <property type="term" value="F:DNA-directed RNA polymerase activity"/>
    <property type="evidence" value="ECO:0007669"/>
    <property type="project" value="UniProtKB-UniRule"/>
</dbReference>
<dbReference type="GO" id="GO:0006352">
    <property type="term" value="P:DNA-templated transcription initiation"/>
    <property type="evidence" value="ECO:0007669"/>
    <property type="project" value="InterPro"/>
</dbReference>
<dbReference type="CDD" id="cd04331">
    <property type="entry name" value="RNAP_E_N"/>
    <property type="match status" value="1"/>
</dbReference>
<dbReference type="CDD" id="cd04460">
    <property type="entry name" value="S1_RpoE"/>
    <property type="match status" value="1"/>
</dbReference>
<dbReference type="Gene3D" id="2.40.50.140">
    <property type="entry name" value="Nucleic acid-binding proteins"/>
    <property type="match status" value="1"/>
</dbReference>
<dbReference type="Gene3D" id="3.30.1490.120">
    <property type="entry name" value="RNA polymerase Rpb7-like, N-terminal domain"/>
    <property type="match status" value="1"/>
</dbReference>
<dbReference type="HAMAP" id="MF_00865">
    <property type="entry name" value="RNApol_arch_Rpo7"/>
    <property type="match status" value="1"/>
</dbReference>
<dbReference type="InterPro" id="IPR012340">
    <property type="entry name" value="NA-bd_OB-fold"/>
</dbReference>
<dbReference type="InterPro" id="IPR036898">
    <property type="entry name" value="RNA_pol_Rpb7-like_N_sf"/>
</dbReference>
<dbReference type="InterPro" id="IPR004519">
    <property type="entry name" value="RNAP_E/RPC8"/>
</dbReference>
<dbReference type="InterPro" id="IPR046399">
    <property type="entry name" value="RNApol_Rpo7"/>
</dbReference>
<dbReference type="InterPro" id="IPR045113">
    <property type="entry name" value="Rpb7-like"/>
</dbReference>
<dbReference type="InterPro" id="IPR005576">
    <property type="entry name" value="Rpb7-like_N"/>
</dbReference>
<dbReference type="InterPro" id="IPR003029">
    <property type="entry name" value="S1_domain"/>
</dbReference>
<dbReference type="NCBIfam" id="NF006333">
    <property type="entry name" value="PRK08563.1"/>
    <property type="match status" value="1"/>
</dbReference>
<dbReference type="NCBIfam" id="TIGR00448">
    <property type="entry name" value="rpoE"/>
    <property type="match status" value="1"/>
</dbReference>
<dbReference type="PANTHER" id="PTHR12709:SF4">
    <property type="entry name" value="DNA-DIRECTED RNA POLYMERASE II SUBUNIT RPB7"/>
    <property type="match status" value="1"/>
</dbReference>
<dbReference type="PANTHER" id="PTHR12709">
    <property type="entry name" value="DNA-DIRECTED RNA POLYMERASE II, III"/>
    <property type="match status" value="1"/>
</dbReference>
<dbReference type="Pfam" id="PF00575">
    <property type="entry name" value="S1"/>
    <property type="match status" value="1"/>
</dbReference>
<dbReference type="Pfam" id="PF03876">
    <property type="entry name" value="SHS2_Rpb7-N"/>
    <property type="match status" value="1"/>
</dbReference>
<dbReference type="SMART" id="SM00316">
    <property type="entry name" value="S1"/>
    <property type="match status" value="1"/>
</dbReference>
<dbReference type="SUPFAM" id="SSF88798">
    <property type="entry name" value="N-terminal, heterodimerisation domain of RBP7 (RpoE)"/>
    <property type="match status" value="1"/>
</dbReference>
<dbReference type="SUPFAM" id="SSF50249">
    <property type="entry name" value="Nucleic acid-binding proteins"/>
    <property type="match status" value="1"/>
</dbReference>
<dbReference type="PROSITE" id="PS50126">
    <property type="entry name" value="S1"/>
    <property type="match status" value="1"/>
</dbReference>
<proteinExistence type="evidence at protein level"/>